<proteinExistence type="inferred from homology"/>
<accession>B2UV32</accession>
<comment type="function">
    <text evidence="1">NDH-1 shuttles electrons from NADH, via FMN and iron-sulfur (Fe-S) centers, to quinones in the respiratory chain. The immediate electron acceptor for the enzyme in this species is believed to be ubiquinone. Couples the redox reaction to proton translocation (for every two electrons transferred, four hydrogen ions are translocated across the cytoplasmic membrane), and thus conserves the redox energy in a proton gradient.</text>
</comment>
<comment type="catalytic activity">
    <reaction evidence="1">
        <text>a quinone + NADH + 5 H(+)(in) = a quinol + NAD(+) + 4 H(+)(out)</text>
        <dbReference type="Rhea" id="RHEA:57888"/>
        <dbReference type="ChEBI" id="CHEBI:15378"/>
        <dbReference type="ChEBI" id="CHEBI:24646"/>
        <dbReference type="ChEBI" id="CHEBI:57540"/>
        <dbReference type="ChEBI" id="CHEBI:57945"/>
        <dbReference type="ChEBI" id="CHEBI:132124"/>
    </reaction>
</comment>
<comment type="cofactor">
    <cofactor evidence="1">
        <name>[4Fe-4S] cluster</name>
        <dbReference type="ChEBI" id="CHEBI:49883"/>
    </cofactor>
    <text evidence="1">Binds 2 [4Fe-4S] clusters per subunit.</text>
</comment>
<comment type="subunit">
    <text evidence="1">NDH-1 is composed of 14 different subunits. Subunits NuoA, H, J, K, L, M, N constitute the membrane sector of the complex.</text>
</comment>
<comment type="subcellular location">
    <subcellularLocation>
        <location evidence="1">Cell inner membrane</location>
        <topology evidence="1">Peripheral membrane protein</topology>
    </subcellularLocation>
</comment>
<comment type="similarity">
    <text evidence="1">Belongs to the complex I 23 kDa subunit family.</text>
</comment>
<feature type="chain" id="PRO_1000143648" description="NADH-quinone oxidoreductase subunit I">
    <location>
        <begin position="1"/>
        <end position="220"/>
    </location>
</feature>
<feature type="domain" description="4Fe-4S ferredoxin-type 1" evidence="1">
    <location>
        <begin position="71"/>
        <end position="102"/>
    </location>
</feature>
<feature type="domain" description="4Fe-4S ferredoxin-type 2" evidence="1">
    <location>
        <begin position="112"/>
        <end position="141"/>
    </location>
</feature>
<feature type="region of interest" description="Disordered" evidence="2">
    <location>
        <begin position="187"/>
        <end position="220"/>
    </location>
</feature>
<feature type="compositionally biased region" description="Basic and acidic residues" evidence="2">
    <location>
        <begin position="198"/>
        <end position="207"/>
    </location>
</feature>
<feature type="binding site" evidence="1">
    <location>
        <position position="82"/>
    </location>
    <ligand>
        <name>[4Fe-4S] cluster</name>
        <dbReference type="ChEBI" id="CHEBI:49883"/>
        <label>1</label>
    </ligand>
</feature>
<feature type="binding site" evidence="1">
    <location>
        <position position="85"/>
    </location>
    <ligand>
        <name>[4Fe-4S] cluster</name>
        <dbReference type="ChEBI" id="CHEBI:49883"/>
        <label>1</label>
    </ligand>
</feature>
<feature type="binding site" evidence="1">
    <location>
        <position position="88"/>
    </location>
    <ligand>
        <name>[4Fe-4S] cluster</name>
        <dbReference type="ChEBI" id="CHEBI:49883"/>
        <label>1</label>
    </ligand>
</feature>
<feature type="binding site" evidence="1">
    <location>
        <position position="92"/>
    </location>
    <ligand>
        <name>[4Fe-4S] cluster</name>
        <dbReference type="ChEBI" id="CHEBI:49883"/>
        <label>2</label>
    </ligand>
</feature>
<feature type="binding site" evidence="1">
    <location>
        <position position="121"/>
    </location>
    <ligand>
        <name>[4Fe-4S] cluster</name>
        <dbReference type="ChEBI" id="CHEBI:49883"/>
        <label>2</label>
    </ligand>
</feature>
<feature type="binding site" evidence="1">
    <location>
        <position position="124"/>
    </location>
    <ligand>
        <name>[4Fe-4S] cluster</name>
        <dbReference type="ChEBI" id="CHEBI:49883"/>
        <label>2</label>
    </ligand>
</feature>
<feature type="binding site" evidence="1">
    <location>
        <position position="127"/>
    </location>
    <ligand>
        <name>[4Fe-4S] cluster</name>
        <dbReference type="ChEBI" id="CHEBI:49883"/>
        <label>2</label>
    </ligand>
</feature>
<feature type="binding site" evidence="1">
    <location>
        <position position="131"/>
    </location>
    <ligand>
        <name>[4Fe-4S] cluster</name>
        <dbReference type="ChEBI" id="CHEBI:49883"/>
        <label>1</label>
    </ligand>
</feature>
<organism>
    <name type="scientific">Helicobacter pylori (strain Shi470)</name>
    <dbReference type="NCBI Taxonomy" id="512562"/>
    <lineage>
        <taxon>Bacteria</taxon>
        <taxon>Pseudomonadati</taxon>
        <taxon>Campylobacterota</taxon>
        <taxon>Epsilonproteobacteria</taxon>
        <taxon>Campylobacterales</taxon>
        <taxon>Helicobacteraceae</taxon>
        <taxon>Helicobacter</taxon>
    </lineage>
</organism>
<name>NUOI_HELPS</name>
<keyword id="KW-0004">4Fe-4S</keyword>
<keyword id="KW-0997">Cell inner membrane</keyword>
<keyword id="KW-1003">Cell membrane</keyword>
<keyword id="KW-0408">Iron</keyword>
<keyword id="KW-0411">Iron-sulfur</keyword>
<keyword id="KW-0472">Membrane</keyword>
<keyword id="KW-0479">Metal-binding</keyword>
<keyword id="KW-0520">NAD</keyword>
<keyword id="KW-0874">Quinone</keyword>
<keyword id="KW-0677">Repeat</keyword>
<keyword id="KW-1278">Translocase</keyword>
<keyword id="KW-0830">Ubiquinone</keyword>
<protein>
    <recommendedName>
        <fullName evidence="1">NADH-quinone oxidoreductase subunit I</fullName>
        <ecNumber evidence="1">7.1.1.-</ecNumber>
    </recommendedName>
    <alternativeName>
        <fullName evidence="1">NADH dehydrogenase I subunit I</fullName>
    </alternativeName>
    <alternativeName>
        <fullName evidence="1">NDH-1 subunit I</fullName>
    </alternativeName>
</protein>
<gene>
    <name evidence="1" type="primary">nuoI</name>
    <name type="ordered locus">HPSH_06570</name>
</gene>
<evidence type="ECO:0000255" key="1">
    <source>
        <dbReference type="HAMAP-Rule" id="MF_01351"/>
    </source>
</evidence>
<evidence type="ECO:0000256" key="2">
    <source>
        <dbReference type="SAM" id="MobiDB-lite"/>
    </source>
</evidence>
<dbReference type="EC" id="7.1.1.-" evidence="1"/>
<dbReference type="EMBL" id="CP001072">
    <property type="protein sequence ID" value="ACD48714.1"/>
    <property type="molecule type" value="Genomic_DNA"/>
</dbReference>
<dbReference type="RefSeq" id="WP_001118537.1">
    <property type="nucleotide sequence ID" value="NC_010698.2"/>
</dbReference>
<dbReference type="SMR" id="B2UV32"/>
<dbReference type="KEGG" id="hps:HPSH_06570"/>
<dbReference type="HOGENOM" id="CLU_067218_4_1_7"/>
<dbReference type="GO" id="GO:0005886">
    <property type="term" value="C:plasma membrane"/>
    <property type="evidence" value="ECO:0007669"/>
    <property type="project" value="UniProtKB-SubCell"/>
</dbReference>
<dbReference type="GO" id="GO:0051539">
    <property type="term" value="F:4 iron, 4 sulfur cluster binding"/>
    <property type="evidence" value="ECO:0007669"/>
    <property type="project" value="UniProtKB-KW"/>
</dbReference>
<dbReference type="GO" id="GO:0005506">
    <property type="term" value="F:iron ion binding"/>
    <property type="evidence" value="ECO:0007669"/>
    <property type="project" value="UniProtKB-UniRule"/>
</dbReference>
<dbReference type="GO" id="GO:0050136">
    <property type="term" value="F:NADH:ubiquinone reductase (non-electrogenic) activity"/>
    <property type="evidence" value="ECO:0007669"/>
    <property type="project" value="UniProtKB-UniRule"/>
</dbReference>
<dbReference type="GO" id="GO:0048038">
    <property type="term" value="F:quinone binding"/>
    <property type="evidence" value="ECO:0007669"/>
    <property type="project" value="UniProtKB-KW"/>
</dbReference>
<dbReference type="GO" id="GO:0009060">
    <property type="term" value="P:aerobic respiration"/>
    <property type="evidence" value="ECO:0007669"/>
    <property type="project" value="TreeGrafter"/>
</dbReference>
<dbReference type="FunFam" id="3.30.70.3270:FF:000011">
    <property type="entry name" value="NADH-quinone oxidoreductase subunit I"/>
    <property type="match status" value="1"/>
</dbReference>
<dbReference type="Gene3D" id="3.30.70.3270">
    <property type="match status" value="1"/>
</dbReference>
<dbReference type="HAMAP" id="MF_01351">
    <property type="entry name" value="NDH1_NuoI"/>
    <property type="match status" value="1"/>
</dbReference>
<dbReference type="InterPro" id="IPR017896">
    <property type="entry name" value="4Fe4S_Fe-S-bd"/>
</dbReference>
<dbReference type="InterPro" id="IPR017900">
    <property type="entry name" value="4Fe4S_Fe_S_CS"/>
</dbReference>
<dbReference type="InterPro" id="IPR010226">
    <property type="entry name" value="NADH_quinone_OxRdtase_chainI"/>
</dbReference>
<dbReference type="NCBIfam" id="TIGR01971">
    <property type="entry name" value="NuoI"/>
    <property type="match status" value="1"/>
</dbReference>
<dbReference type="NCBIfam" id="NF004542">
    <property type="entry name" value="PRK05888.2-3"/>
    <property type="match status" value="1"/>
</dbReference>
<dbReference type="NCBIfam" id="NF004544">
    <property type="entry name" value="PRK05888.2-6"/>
    <property type="match status" value="1"/>
</dbReference>
<dbReference type="PANTHER" id="PTHR10849:SF20">
    <property type="entry name" value="NADH DEHYDROGENASE [UBIQUINONE] IRON-SULFUR PROTEIN 8, MITOCHONDRIAL"/>
    <property type="match status" value="1"/>
</dbReference>
<dbReference type="PANTHER" id="PTHR10849">
    <property type="entry name" value="NADH DEHYDROGENASE UBIQUINONE IRON-SULFUR PROTEIN 8, MITOCHONDRIAL"/>
    <property type="match status" value="1"/>
</dbReference>
<dbReference type="Pfam" id="PF12838">
    <property type="entry name" value="Fer4_7"/>
    <property type="match status" value="1"/>
</dbReference>
<dbReference type="SUPFAM" id="SSF46548">
    <property type="entry name" value="alpha-helical ferredoxin"/>
    <property type="match status" value="1"/>
</dbReference>
<dbReference type="PROSITE" id="PS00198">
    <property type="entry name" value="4FE4S_FER_1"/>
    <property type="match status" value="1"/>
</dbReference>
<dbReference type="PROSITE" id="PS51379">
    <property type="entry name" value="4FE4S_FER_2"/>
    <property type="match status" value="2"/>
</dbReference>
<sequence>MAKQEYKQLPKRAEVHSATEQFKDTIKTSLGLDLFKGLGLTIKEFFSPSVTIHYPMEQLPLSPRYRAVHNLQRLLDSGSERCIGCGLCEKICTSNCIRIITHKGEDNRKKIDSYTINLGRCIYCGLCAEVCPELAIVMGNRFENASTQRSQYGSKSEFLTSEQDAKNCSHAEFLGFGAVSPNYNERMQATPLDYVQEPSKEESKEETPTNPESNKGDENV</sequence>
<reference key="1">
    <citation type="submission" date="2008-05" db="EMBL/GenBank/DDBJ databases">
        <title>Genome sequence of Helicobacter pylori from the remote Amazon: traces of Asian ancestry of the first Americans.</title>
        <authorList>
            <person name="Kersulyte D."/>
            <person name="Kalia A."/>
            <person name="Gilman R.H."/>
            <person name="Berg D.E."/>
        </authorList>
    </citation>
    <scope>NUCLEOTIDE SEQUENCE [LARGE SCALE GENOMIC DNA]</scope>
    <source>
        <strain>Shi470</strain>
    </source>
</reference>